<evidence type="ECO:0000255" key="1">
    <source>
        <dbReference type="HAMAP-Rule" id="MF_01334"/>
    </source>
</evidence>
<evidence type="ECO:0000256" key="2">
    <source>
        <dbReference type="SAM" id="MobiDB-lite"/>
    </source>
</evidence>
<evidence type="ECO:0000305" key="3"/>
<comment type="function">
    <text evidence="1">This is one of the proteins that binds to the 5S RNA in the ribosome where it forms part of the central protuberance.</text>
</comment>
<comment type="subunit">
    <text evidence="1">Part of the 50S ribosomal subunit; part of the 5S rRNA/L5/L18/L25 subcomplex. Contacts the 5S rRNA. Binds to the 5S rRNA independently of L5 and L18.</text>
</comment>
<comment type="similarity">
    <text evidence="1">Belongs to the bacterial ribosomal protein bL25 family. CTC subfamily.</text>
</comment>
<gene>
    <name evidence="1" type="primary">rplY</name>
    <name evidence="1" type="synonym">ctc</name>
    <name type="ordered locus">Noc_0515</name>
</gene>
<organism>
    <name type="scientific">Nitrosococcus oceani (strain ATCC 19707 / BCRC 17464 / JCM 30415 / NCIMB 11848 / C-107)</name>
    <dbReference type="NCBI Taxonomy" id="323261"/>
    <lineage>
        <taxon>Bacteria</taxon>
        <taxon>Pseudomonadati</taxon>
        <taxon>Pseudomonadota</taxon>
        <taxon>Gammaproteobacteria</taxon>
        <taxon>Chromatiales</taxon>
        <taxon>Chromatiaceae</taxon>
        <taxon>Nitrosococcus</taxon>
    </lineage>
</organism>
<feature type="chain" id="PRO_0000244219" description="Large ribosomal subunit protein bL25">
    <location>
        <begin position="1"/>
        <end position="214"/>
    </location>
</feature>
<feature type="region of interest" description="Disordered" evidence="2">
    <location>
        <begin position="193"/>
        <end position="214"/>
    </location>
</feature>
<feature type="compositionally biased region" description="Acidic residues" evidence="2">
    <location>
        <begin position="198"/>
        <end position="214"/>
    </location>
</feature>
<protein>
    <recommendedName>
        <fullName evidence="1">Large ribosomal subunit protein bL25</fullName>
    </recommendedName>
    <alternativeName>
        <fullName evidence="3">50S ribosomal protein L25</fullName>
    </alternativeName>
    <alternativeName>
        <fullName evidence="1">General stress protein CTC</fullName>
    </alternativeName>
</protein>
<dbReference type="EMBL" id="CP000127">
    <property type="protein sequence ID" value="ABA57038.1"/>
    <property type="molecule type" value="Genomic_DNA"/>
</dbReference>
<dbReference type="RefSeq" id="WP_002811910.1">
    <property type="nucleotide sequence ID" value="NC_007484.1"/>
</dbReference>
<dbReference type="SMR" id="Q3JDQ8"/>
<dbReference type="STRING" id="323261.Noc_0515"/>
<dbReference type="KEGG" id="noc:Noc_0515"/>
<dbReference type="eggNOG" id="COG1825">
    <property type="taxonomic scope" value="Bacteria"/>
</dbReference>
<dbReference type="HOGENOM" id="CLU_075939_0_1_6"/>
<dbReference type="InParanoid" id="Q3JDQ8"/>
<dbReference type="Proteomes" id="UP000006838">
    <property type="component" value="Chromosome"/>
</dbReference>
<dbReference type="GO" id="GO:0022625">
    <property type="term" value="C:cytosolic large ribosomal subunit"/>
    <property type="evidence" value="ECO:0007669"/>
    <property type="project" value="TreeGrafter"/>
</dbReference>
<dbReference type="GO" id="GO:0008097">
    <property type="term" value="F:5S rRNA binding"/>
    <property type="evidence" value="ECO:0007669"/>
    <property type="project" value="InterPro"/>
</dbReference>
<dbReference type="GO" id="GO:0003735">
    <property type="term" value="F:structural constituent of ribosome"/>
    <property type="evidence" value="ECO:0007669"/>
    <property type="project" value="InterPro"/>
</dbReference>
<dbReference type="GO" id="GO:0006412">
    <property type="term" value="P:translation"/>
    <property type="evidence" value="ECO:0007669"/>
    <property type="project" value="UniProtKB-UniRule"/>
</dbReference>
<dbReference type="CDD" id="cd00495">
    <property type="entry name" value="Ribosomal_L25_TL5_CTC"/>
    <property type="match status" value="1"/>
</dbReference>
<dbReference type="Gene3D" id="2.170.120.20">
    <property type="entry name" value="Ribosomal protein L25, beta domain"/>
    <property type="match status" value="1"/>
</dbReference>
<dbReference type="Gene3D" id="2.40.240.10">
    <property type="entry name" value="Ribosomal Protein L25, Chain P"/>
    <property type="match status" value="1"/>
</dbReference>
<dbReference type="HAMAP" id="MF_01334">
    <property type="entry name" value="Ribosomal_bL25_CTC"/>
    <property type="match status" value="1"/>
</dbReference>
<dbReference type="InterPro" id="IPR020056">
    <property type="entry name" value="Rbsml_bL25/Gln-tRNA_synth_N"/>
</dbReference>
<dbReference type="InterPro" id="IPR011035">
    <property type="entry name" value="Ribosomal_bL25/Gln-tRNA_synth"/>
</dbReference>
<dbReference type="InterPro" id="IPR020057">
    <property type="entry name" value="Ribosomal_bL25_b-dom"/>
</dbReference>
<dbReference type="InterPro" id="IPR037121">
    <property type="entry name" value="Ribosomal_bL25_C"/>
</dbReference>
<dbReference type="InterPro" id="IPR001021">
    <property type="entry name" value="Ribosomal_bL25_long"/>
</dbReference>
<dbReference type="InterPro" id="IPR029751">
    <property type="entry name" value="Ribosomal_L25_dom"/>
</dbReference>
<dbReference type="InterPro" id="IPR020930">
    <property type="entry name" value="Ribosomal_uL5_bac-type"/>
</dbReference>
<dbReference type="NCBIfam" id="TIGR00731">
    <property type="entry name" value="bL25_bact_ctc"/>
    <property type="match status" value="1"/>
</dbReference>
<dbReference type="NCBIfam" id="NF004128">
    <property type="entry name" value="PRK05618.1-2"/>
    <property type="match status" value="1"/>
</dbReference>
<dbReference type="NCBIfam" id="NF004130">
    <property type="entry name" value="PRK05618.1-5"/>
    <property type="match status" value="1"/>
</dbReference>
<dbReference type="NCBIfam" id="NF004612">
    <property type="entry name" value="PRK05943.1"/>
    <property type="match status" value="1"/>
</dbReference>
<dbReference type="PANTHER" id="PTHR33284">
    <property type="entry name" value="RIBOSOMAL PROTEIN L25/GLN-TRNA SYNTHETASE, ANTI-CODON-BINDING DOMAIN-CONTAINING PROTEIN"/>
    <property type="match status" value="1"/>
</dbReference>
<dbReference type="PANTHER" id="PTHR33284:SF1">
    <property type="entry name" value="RIBOSOMAL PROTEIN L25_GLN-TRNA SYNTHETASE, ANTI-CODON-BINDING DOMAIN-CONTAINING PROTEIN"/>
    <property type="match status" value="1"/>
</dbReference>
<dbReference type="Pfam" id="PF01386">
    <property type="entry name" value="Ribosomal_L25p"/>
    <property type="match status" value="1"/>
</dbReference>
<dbReference type="Pfam" id="PF14693">
    <property type="entry name" value="Ribosomal_TL5_C"/>
    <property type="match status" value="1"/>
</dbReference>
<dbReference type="SUPFAM" id="SSF50715">
    <property type="entry name" value="Ribosomal protein L25-like"/>
    <property type="match status" value="1"/>
</dbReference>
<name>RL25_NITOC</name>
<keyword id="KW-1185">Reference proteome</keyword>
<keyword id="KW-0687">Ribonucleoprotein</keyword>
<keyword id="KW-0689">Ribosomal protein</keyword>
<keyword id="KW-0694">RNA-binding</keyword>
<keyword id="KW-0699">rRNA-binding</keyword>
<proteinExistence type="inferred from homology"/>
<reference key="1">
    <citation type="journal article" date="2006" name="Appl. Environ. Microbiol.">
        <title>Complete genome sequence of the marine, chemolithoautotrophic, ammonia-oxidizing bacterium Nitrosococcus oceani ATCC 19707.</title>
        <authorList>
            <person name="Klotz M.G."/>
            <person name="Arp D.J."/>
            <person name="Chain P.S.G."/>
            <person name="El-Sheikh A.F."/>
            <person name="Hauser L.J."/>
            <person name="Hommes N.G."/>
            <person name="Larimer F.W."/>
            <person name="Malfatti S.A."/>
            <person name="Norton J.M."/>
            <person name="Poret-Peterson A.T."/>
            <person name="Vergez L.M."/>
            <person name="Ward B.B."/>
        </authorList>
    </citation>
    <scope>NUCLEOTIDE SEQUENCE [LARGE SCALE GENOMIC DNA]</scope>
    <source>
        <strain>ATCC 19707 / BCRC 17464 / JCM 30415 / NCIMB 11848 / C-107</strain>
    </source>
</reference>
<accession>Q3JDQ8</accession>
<sequence length="214" mass="23409">MENLFELHADVRVEQGKGASRRLRRAGKVPAVLYGAAKEPISLLFDHNLLFRHLSHDAFYSHILTIHANGKAERVVLKALQRDPVNPNKVLHLDLQRVSSTQKLTIKVPLHFIGDEMAPGVKQEGGTVARLLNDIEISCLAKDLPEYIEVDLADLGVGETVHLSDLKLPGGVEIPALKLGEDYDQPVVTIHKPRAAAEEEDTGAEGDVEAADAE</sequence>